<comment type="function">
    <text evidence="1">Binds to the IL-1 type I receptor following IL-1 engagement, triggering intracellular signaling cascades leading to transcriptional up-regulation and mRNA stabilization.</text>
</comment>
<comment type="subunit">
    <text evidence="1">Interacts with MYD88. IL-1 stimulation leads to the formation of a signaling complex which dissociates from the IL-1 receptor following the binding of PELI1 (By similarity).</text>
</comment>
<comment type="domain">
    <text>The protein kinase domain is predicted to be catalytically inactive.</text>
</comment>
<comment type="similarity">
    <text evidence="4">Belongs to the protein kinase superfamily. TKL Ser/Thr protein kinase family. Pelle subfamily.</text>
</comment>
<comment type="caution">
    <text evidence="4">Asn-335 is present instead of the conserved Asp which is expected to be an active site residue.</text>
</comment>
<reference key="1">
    <citation type="journal article" date="2004" name="Genome Res.">
        <title>The status, quality, and expansion of the NIH full-length cDNA project: the Mammalian Gene Collection (MGC).</title>
        <authorList>
            <consortium name="The MGC Project Team"/>
        </authorList>
    </citation>
    <scope>NUCLEOTIDE SEQUENCE [LARGE SCALE MRNA]</scope>
    <source>
        <tissue>Placenta</tissue>
    </source>
</reference>
<evidence type="ECO:0000250" key="1"/>
<evidence type="ECO:0000255" key="2">
    <source>
        <dbReference type="PROSITE-ProRule" id="PRU00159"/>
    </source>
</evidence>
<evidence type="ECO:0000256" key="3">
    <source>
        <dbReference type="SAM" id="MobiDB-lite"/>
    </source>
</evidence>
<evidence type="ECO:0000305" key="4"/>
<sequence length="624" mass="69237">MACYIYQLPSWVLDDLCRNIDTLSEWDWMQFASYVITDLTQLRKIKSMERVQGVSITRELLWWWSMRQATVQQLVDLLCHLELYRAAQIVLSWKPAPDSLSPLSAFPEAVKPGPVATSGRNLKDDQKKGQPVKPCSFLSSGTTMAGAQQQASCQRPCEEDAPCSLKTDVPDSLQSKYCSTSIPKQEKLLNLPGDRLFWSEADIVQATEDFDQSHRISEGTFADIYRGQRNGVAFAFKRLREVTGSSPGSMDRFLQAEMQLCLRCCHPNILPLLGFCTGRQFHSLIYPYMANGSLQDRLWAQGDSDMLSWPQRASICSGLLLAVEHLHSLDIIHSNVKSANVLLDQHLNPKLAHPVAHPCPTNKKTKYTVMKTHLFQASAAYLPENFIRVGQLTKQVDIFSCGIVLAEVLTGIPAMDKDRSPVYLKDLLLSEIPSNTSSVHSRKTSMGKVVVKEICQKHLERKAGLLPEACAETWATAVSVCLRRREASLEEARVSMAGVEEQLRGQLSLPWSRVSEDTGSSSNTPEETDDVDNSSLSVPSSVMVVSCARVSSPPPSMGNGTAQPSTSGRQEADSSSEACAGPQPPQEATETSWKIEINEAKRRLMENILLYKEEKLDSVELFGP</sequence>
<keyword id="KW-0067">ATP-binding</keyword>
<keyword id="KW-0547">Nucleotide-binding</keyword>
<keyword id="KW-1185">Reference proteome</keyword>
<gene>
    <name type="primary">Irak2</name>
</gene>
<accession>Q4QQS0</accession>
<proteinExistence type="evidence at transcript level"/>
<organism>
    <name type="scientific">Rattus norvegicus</name>
    <name type="common">Rat</name>
    <dbReference type="NCBI Taxonomy" id="10116"/>
    <lineage>
        <taxon>Eukaryota</taxon>
        <taxon>Metazoa</taxon>
        <taxon>Chordata</taxon>
        <taxon>Craniata</taxon>
        <taxon>Vertebrata</taxon>
        <taxon>Euteleostomi</taxon>
        <taxon>Mammalia</taxon>
        <taxon>Eutheria</taxon>
        <taxon>Euarchontoglires</taxon>
        <taxon>Glires</taxon>
        <taxon>Rodentia</taxon>
        <taxon>Myomorpha</taxon>
        <taxon>Muroidea</taxon>
        <taxon>Muridae</taxon>
        <taxon>Murinae</taxon>
        <taxon>Rattus</taxon>
    </lineage>
</organism>
<feature type="chain" id="PRO_0000277562" description="Interleukin-1 receptor-associated kinase-like 2">
    <location>
        <begin position="1"/>
        <end position="624"/>
    </location>
</feature>
<feature type="domain" description="Death">
    <location>
        <begin position="13"/>
        <end position="94"/>
    </location>
</feature>
<feature type="domain" description="Protein kinase" evidence="2">
    <location>
        <begin position="210"/>
        <end position="475"/>
    </location>
</feature>
<feature type="region of interest" description="Disordered" evidence="3">
    <location>
        <begin position="508"/>
        <end position="536"/>
    </location>
</feature>
<feature type="region of interest" description="Disordered" evidence="3">
    <location>
        <begin position="549"/>
        <end position="593"/>
    </location>
</feature>
<feature type="compositionally biased region" description="Polar residues" evidence="3">
    <location>
        <begin position="558"/>
        <end position="577"/>
    </location>
</feature>
<feature type="binding site" evidence="2">
    <location>
        <begin position="216"/>
        <end position="224"/>
    </location>
    <ligand>
        <name>ATP</name>
        <dbReference type="ChEBI" id="CHEBI:30616"/>
    </ligand>
</feature>
<feature type="binding site" evidence="2">
    <location>
        <position position="237"/>
    </location>
    <ligand>
        <name>ATP</name>
        <dbReference type="ChEBI" id="CHEBI:30616"/>
    </ligand>
</feature>
<feature type="binding site" evidence="2">
    <location>
        <begin position="337"/>
        <end position="340"/>
    </location>
    <ligand>
        <name>ATP</name>
        <dbReference type="ChEBI" id="CHEBI:30616"/>
    </ligand>
</feature>
<name>IRAK2_RAT</name>
<dbReference type="EMBL" id="BC098060">
    <property type="protein sequence ID" value="AAH98060.1"/>
    <property type="molecule type" value="mRNA"/>
</dbReference>
<dbReference type="RefSeq" id="NP_001020593.1">
    <property type="nucleotide sequence ID" value="NM_001025422.1"/>
</dbReference>
<dbReference type="SMR" id="Q4QQS0"/>
<dbReference type="FunCoup" id="Q4QQS0">
    <property type="interactions" value="222"/>
</dbReference>
<dbReference type="STRING" id="10116.ENSRNOP00000034508"/>
<dbReference type="iPTMnet" id="Q4QQS0"/>
<dbReference type="PhosphoSitePlus" id="Q4QQS0"/>
<dbReference type="PaxDb" id="10116-ENSRNOP00000034508"/>
<dbReference type="Ensembl" id="ENSRNOT00000029819.5">
    <property type="protein sequence ID" value="ENSRNOP00000034508.4"/>
    <property type="gene ID" value="ENSRNOG00000021817.6"/>
</dbReference>
<dbReference type="GeneID" id="362418"/>
<dbReference type="KEGG" id="rno:362418"/>
<dbReference type="UCSC" id="RGD:1309584">
    <property type="organism name" value="rat"/>
</dbReference>
<dbReference type="AGR" id="RGD:1309584"/>
<dbReference type="CTD" id="3656"/>
<dbReference type="RGD" id="1309584">
    <property type="gene designation" value="Irak2"/>
</dbReference>
<dbReference type="eggNOG" id="KOG1187">
    <property type="taxonomic scope" value="Eukaryota"/>
</dbReference>
<dbReference type="GeneTree" id="ENSGT00940000159835"/>
<dbReference type="HOGENOM" id="CLU_000288_173_0_1"/>
<dbReference type="InParanoid" id="Q4QQS0"/>
<dbReference type="OMA" id="ALSEWDW"/>
<dbReference type="OrthoDB" id="4062651at2759"/>
<dbReference type="PhylomeDB" id="Q4QQS0"/>
<dbReference type="TreeFam" id="TF328924"/>
<dbReference type="Reactome" id="R-RNO-450302">
    <property type="pathway name" value="activated TAK1 mediates p38 MAPK activation"/>
</dbReference>
<dbReference type="Reactome" id="R-RNO-450321">
    <property type="pathway name" value="JNK (c-Jun kinases) phosphorylation and activation mediated by activated human TAK1"/>
</dbReference>
<dbReference type="Reactome" id="R-RNO-9020702">
    <property type="pathway name" value="Interleukin-1 signaling"/>
</dbReference>
<dbReference type="Reactome" id="R-RNO-937042">
    <property type="pathway name" value="IRAK2 mediated activation of TAK1 complex"/>
</dbReference>
<dbReference type="Reactome" id="R-RNO-937072">
    <property type="pathway name" value="TRAF6-mediated induction of TAK1 complex within TLR4 complex"/>
</dbReference>
<dbReference type="Reactome" id="R-RNO-975163">
    <property type="pathway name" value="IRAK2 mediated activation of TAK1 complex upon TLR7/8 or 9 stimulation"/>
</dbReference>
<dbReference type="PRO" id="PR:Q4QQS0"/>
<dbReference type="Proteomes" id="UP000002494">
    <property type="component" value="Chromosome 4"/>
</dbReference>
<dbReference type="Bgee" id="ENSRNOG00000021817">
    <property type="expression patterns" value="Expressed in jejunum and 19 other cell types or tissues"/>
</dbReference>
<dbReference type="GO" id="GO:0005737">
    <property type="term" value="C:cytoplasm"/>
    <property type="evidence" value="ECO:0000318"/>
    <property type="project" value="GO_Central"/>
</dbReference>
<dbReference type="GO" id="GO:0005829">
    <property type="term" value="C:cytosol"/>
    <property type="evidence" value="ECO:0000304"/>
    <property type="project" value="Reactome"/>
</dbReference>
<dbReference type="GO" id="GO:0005634">
    <property type="term" value="C:nucleus"/>
    <property type="evidence" value="ECO:0000318"/>
    <property type="project" value="GO_Central"/>
</dbReference>
<dbReference type="GO" id="GO:0005886">
    <property type="term" value="C:plasma membrane"/>
    <property type="evidence" value="ECO:0000318"/>
    <property type="project" value="GO_Central"/>
</dbReference>
<dbReference type="GO" id="GO:0005524">
    <property type="term" value="F:ATP binding"/>
    <property type="evidence" value="ECO:0007669"/>
    <property type="project" value="UniProtKB-KW"/>
</dbReference>
<dbReference type="GO" id="GO:0060090">
    <property type="term" value="F:molecular adaptor activity"/>
    <property type="evidence" value="ECO:0000266"/>
    <property type="project" value="RGD"/>
</dbReference>
<dbReference type="GO" id="GO:0046982">
    <property type="term" value="F:protein heterodimerization activity"/>
    <property type="evidence" value="ECO:0000266"/>
    <property type="project" value="RGD"/>
</dbReference>
<dbReference type="GO" id="GO:0042803">
    <property type="term" value="F:protein homodimerization activity"/>
    <property type="evidence" value="ECO:0000266"/>
    <property type="project" value="RGD"/>
</dbReference>
<dbReference type="GO" id="GO:0004672">
    <property type="term" value="F:protein kinase activity"/>
    <property type="evidence" value="ECO:0007669"/>
    <property type="project" value="InterPro"/>
</dbReference>
<dbReference type="GO" id="GO:0035591">
    <property type="term" value="F:signaling adaptor activity"/>
    <property type="evidence" value="ECO:0000266"/>
    <property type="project" value="RGD"/>
</dbReference>
<dbReference type="GO" id="GO:0007249">
    <property type="term" value="P:canonical NF-kappaB signal transduction"/>
    <property type="evidence" value="ECO:0000266"/>
    <property type="project" value="RGD"/>
</dbReference>
<dbReference type="GO" id="GO:0070498">
    <property type="term" value="P:interleukin-1-mediated signaling pathway"/>
    <property type="evidence" value="ECO:0000266"/>
    <property type="project" value="RGD"/>
</dbReference>
<dbReference type="GO" id="GO:0035556">
    <property type="term" value="P:intracellular signal transduction"/>
    <property type="evidence" value="ECO:0000318"/>
    <property type="project" value="GO_Central"/>
</dbReference>
<dbReference type="GO" id="GO:0031663">
    <property type="term" value="P:lipopolysaccharide-mediated signaling pathway"/>
    <property type="evidence" value="ECO:0000266"/>
    <property type="project" value="RGD"/>
</dbReference>
<dbReference type="GO" id="GO:0043124">
    <property type="term" value="P:negative regulation of canonical NF-kappaB signal transduction"/>
    <property type="evidence" value="ECO:0000266"/>
    <property type="project" value="RGD"/>
</dbReference>
<dbReference type="GO" id="GO:0043123">
    <property type="term" value="P:positive regulation of canonical NF-kappaB signal transduction"/>
    <property type="evidence" value="ECO:0000318"/>
    <property type="project" value="GO_Central"/>
</dbReference>
<dbReference type="GO" id="GO:0001959">
    <property type="term" value="P:regulation of cytokine-mediated signaling pathway"/>
    <property type="evidence" value="ECO:0000266"/>
    <property type="project" value="RGD"/>
</dbReference>
<dbReference type="GO" id="GO:0070555">
    <property type="term" value="P:response to interleukin-1"/>
    <property type="evidence" value="ECO:0000266"/>
    <property type="project" value="RGD"/>
</dbReference>
<dbReference type="GO" id="GO:0008063">
    <property type="term" value="P:Toll signaling pathway"/>
    <property type="evidence" value="ECO:0000318"/>
    <property type="project" value="GO_Central"/>
</dbReference>
<dbReference type="GO" id="GO:0034142">
    <property type="term" value="P:toll-like receptor 4 signaling pathway"/>
    <property type="evidence" value="ECO:0000266"/>
    <property type="project" value="RGD"/>
</dbReference>
<dbReference type="CDD" id="cd08795">
    <property type="entry name" value="Death_IRAK2"/>
    <property type="match status" value="1"/>
</dbReference>
<dbReference type="FunFam" id="1.10.510.10:FF:000586">
    <property type="entry name" value="Interleukin-1 receptor-associated kinase-like 2"/>
    <property type="match status" value="1"/>
</dbReference>
<dbReference type="FunFam" id="1.10.533.10:FF:000030">
    <property type="entry name" value="Interleukin-1 receptor-associated kinase-like 2"/>
    <property type="match status" value="1"/>
</dbReference>
<dbReference type="FunFam" id="3.30.200.20:FF:000412">
    <property type="entry name" value="interleukin-1 receptor-associated kinase-like 2"/>
    <property type="match status" value="1"/>
</dbReference>
<dbReference type="Gene3D" id="1.10.533.10">
    <property type="entry name" value="Death Domain, Fas"/>
    <property type="match status" value="1"/>
</dbReference>
<dbReference type="Gene3D" id="3.30.200.20">
    <property type="entry name" value="Phosphorylase Kinase, domain 1"/>
    <property type="match status" value="1"/>
</dbReference>
<dbReference type="Gene3D" id="1.10.510.10">
    <property type="entry name" value="Transferase(Phosphotransferase) domain 1"/>
    <property type="match status" value="1"/>
</dbReference>
<dbReference type="InterPro" id="IPR011029">
    <property type="entry name" value="DEATH-like_dom_sf"/>
</dbReference>
<dbReference type="InterPro" id="IPR000488">
    <property type="entry name" value="Death_dom"/>
</dbReference>
<dbReference type="InterPro" id="IPR042151">
    <property type="entry name" value="Death_IRAK2"/>
</dbReference>
<dbReference type="InterPro" id="IPR011009">
    <property type="entry name" value="Kinase-like_dom_sf"/>
</dbReference>
<dbReference type="InterPro" id="IPR000719">
    <property type="entry name" value="Prot_kinase_dom"/>
</dbReference>
<dbReference type="PANTHER" id="PTHR24419">
    <property type="entry name" value="INTERLEUKIN-1 RECEPTOR-ASSOCIATED KINASE"/>
    <property type="match status" value="1"/>
</dbReference>
<dbReference type="PANTHER" id="PTHR24419:SF2">
    <property type="entry name" value="INTERLEUKIN-1 RECEPTOR-ASSOCIATED KINASE-LIKE 2"/>
    <property type="match status" value="1"/>
</dbReference>
<dbReference type="Pfam" id="PF00531">
    <property type="entry name" value="Death"/>
    <property type="match status" value="1"/>
</dbReference>
<dbReference type="Pfam" id="PF00069">
    <property type="entry name" value="Pkinase"/>
    <property type="match status" value="1"/>
</dbReference>
<dbReference type="SUPFAM" id="SSF47986">
    <property type="entry name" value="DEATH domain"/>
    <property type="match status" value="1"/>
</dbReference>
<dbReference type="SUPFAM" id="SSF56112">
    <property type="entry name" value="Protein kinase-like (PK-like)"/>
    <property type="match status" value="1"/>
</dbReference>
<dbReference type="PROSITE" id="PS50011">
    <property type="entry name" value="PROTEIN_KINASE_DOM"/>
    <property type="match status" value="1"/>
</dbReference>
<protein>
    <recommendedName>
        <fullName>Interleukin-1 receptor-associated kinase-like 2</fullName>
        <shortName>IRAK-2</shortName>
    </recommendedName>
</protein>